<name>MNMM_STAA8</name>
<comment type="function">
    <text evidence="1">Involved in the biosynthesis of 5-methylaminomethyl-2-thiouridine (mnm(5)s(2)U) at the wobble position (U34) in tRNA (PubMed:36762482). Catalyzes the transfer of a methyl group from S-adenosyl-L-methionine to nm(5)s(2)U34 to form mnm(5)s(2)U34 (PubMed:36762482).</text>
</comment>
<comment type="catalytic activity">
    <reaction evidence="1">
        <text>5-aminomethyl-2-thiouridine(34) in tRNA + S-adenosyl-L-methionine = 5-methylaminomethyl-2-thiouridine(34) in tRNA + S-adenosyl-L-homocysteine + H(+)</text>
        <dbReference type="Rhea" id="RHEA:19569"/>
        <dbReference type="Rhea" id="RHEA-COMP:10195"/>
        <dbReference type="Rhea" id="RHEA-COMP:10197"/>
        <dbReference type="ChEBI" id="CHEBI:15378"/>
        <dbReference type="ChEBI" id="CHEBI:57856"/>
        <dbReference type="ChEBI" id="CHEBI:59789"/>
        <dbReference type="ChEBI" id="CHEBI:74454"/>
        <dbReference type="ChEBI" id="CHEBI:74455"/>
        <dbReference type="EC" id="2.1.1.61"/>
    </reaction>
    <physiologicalReaction direction="left-to-right" evidence="1">
        <dbReference type="Rhea" id="RHEA:19570"/>
    </physiologicalReaction>
</comment>
<comment type="pathway">
    <text evidence="1">tRNA modification.</text>
</comment>
<comment type="subunit">
    <text evidence="1">Homodimer.</text>
</comment>
<comment type="similarity">
    <text evidence="3">Belongs to the methyltransferase superfamily. MnmM family.</text>
</comment>
<feature type="chain" id="PRO_0000458274" description="tRNA (mnm(5)s(2)U34)-methyltransferase">
    <location>
        <begin position="1"/>
        <end position="187"/>
    </location>
</feature>
<feature type="binding site" evidence="1 6 7">
    <location>
        <position position="31"/>
    </location>
    <ligand>
        <name>S-adenosyl-L-methionine</name>
        <dbReference type="ChEBI" id="CHEBI:59789"/>
    </ligand>
</feature>
<feature type="binding site" evidence="1 6 7">
    <location>
        <position position="33"/>
    </location>
    <ligand>
        <name>S-adenosyl-L-methionine</name>
        <dbReference type="ChEBI" id="CHEBI:59789"/>
    </ligand>
</feature>
<feature type="binding site" evidence="1 6 7">
    <location>
        <position position="51"/>
    </location>
    <ligand>
        <name>S-adenosyl-L-methionine</name>
        <dbReference type="ChEBI" id="CHEBI:59789"/>
    </ligand>
</feature>
<feature type="binding site" evidence="1 6 7">
    <location>
        <position position="53"/>
    </location>
    <ligand>
        <name>S-adenosyl-L-methionine</name>
        <dbReference type="ChEBI" id="CHEBI:59789"/>
    </ligand>
</feature>
<feature type="binding site" evidence="1 6 7">
    <location>
        <position position="77"/>
    </location>
    <ligand>
        <name>S-adenosyl-L-methionine</name>
        <dbReference type="ChEBI" id="CHEBI:59789"/>
    </ligand>
</feature>
<feature type="binding site" evidence="1 6 7">
    <location>
        <position position="78"/>
    </location>
    <ligand>
        <name>S-adenosyl-L-methionine</name>
        <dbReference type="ChEBI" id="CHEBI:59789"/>
    </ligand>
</feature>
<feature type="helix" evidence="8">
    <location>
        <begin position="6"/>
        <end position="15"/>
    </location>
</feature>
<feature type="strand" evidence="8">
    <location>
        <begin position="23"/>
        <end position="27"/>
    </location>
</feature>
<feature type="helix" evidence="8">
    <location>
        <begin position="33"/>
        <end position="41"/>
    </location>
</feature>
<feature type="strand" evidence="8">
    <location>
        <begin position="45"/>
        <end position="50"/>
    </location>
</feature>
<feature type="helix" evidence="8">
    <location>
        <begin position="54"/>
        <end position="63"/>
    </location>
</feature>
<feature type="turn" evidence="8">
    <location>
        <begin position="64"/>
        <end position="66"/>
    </location>
</feature>
<feature type="strand" evidence="8">
    <location>
        <begin position="68"/>
        <end position="73"/>
    </location>
</feature>
<feature type="helix" evidence="8">
    <location>
        <begin position="77"/>
        <end position="82"/>
    </location>
</feature>
<feature type="helix" evidence="8">
    <location>
        <begin position="86"/>
        <end position="88"/>
    </location>
</feature>
<feature type="strand" evidence="8">
    <location>
        <begin position="92"/>
        <end position="98"/>
    </location>
</feature>
<feature type="helix" evidence="8">
    <location>
        <begin position="99"/>
        <end position="101"/>
    </location>
</feature>
<feature type="strand" evidence="8">
    <location>
        <begin position="105"/>
        <end position="107"/>
    </location>
</feature>
<feature type="helix" evidence="8">
    <location>
        <begin position="112"/>
        <end position="124"/>
    </location>
</feature>
<feature type="strand" evidence="8">
    <location>
        <begin position="127"/>
        <end position="137"/>
    </location>
</feature>
<feature type="helix" evidence="8">
    <location>
        <begin position="144"/>
        <end position="156"/>
    </location>
</feature>
<feature type="turn" evidence="8">
    <location>
        <begin position="160"/>
        <end position="162"/>
    </location>
</feature>
<feature type="strand" evidence="8">
    <location>
        <begin position="163"/>
        <end position="170"/>
    </location>
</feature>
<feature type="strand" evidence="8">
    <location>
        <begin position="179"/>
        <end position="185"/>
    </location>
</feature>
<evidence type="ECO:0000269" key="1">
    <source>
    </source>
</evidence>
<evidence type="ECO:0000303" key="2">
    <source>
    </source>
</evidence>
<evidence type="ECO:0000305" key="3"/>
<evidence type="ECO:0000312" key="4">
    <source>
        <dbReference type="EMBL" id="ABD30943.1"/>
    </source>
</evidence>
<evidence type="ECO:0007744" key="5">
    <source>
        <dbReference type="PDB" id="8H1A"/>
    </source>
</evidence>
<evidence type="ECO:0007744" key="6">
    <source>
        <dbReference type="PDB" id="8H1B"/>
    </source>
</evidence>
<evidence type="ECO:0007744" key="7">
    <source>
        <dbReference type="PDB" id="8H27"/>
    </source>
</evidence>
<evidence type="ECO:0007829" key="8">
    <source>
        <dbReference type="PDB" id="8H1A"/>
    </source>
</evidence>
<accession>Q2FXG9</accession>
<sequence>MKLERILPFSKTLIKQHITPESIVVDATCGNGNDTLFLAEQVPEGHVYGFDIQDLALENTRDKVKDFNHVSLIKDGHENIEHHINDAHKGHIDAAIFNLGYLPKGDKSIVTKPDTTIQAINSLLSLMSIEGIIVLVIYHGHSEGQIEKHALLDYLSTLDQKHAQVLQYQFLNQRNHAPFICAIEKIS</sequence>
<gene>
    <name evidence="2" type="primary">mnmM</name>
    <name evidence="4" type="ordered locus">SAOUHSC_01878</name>
</gene>
<organism>
    <name type="scientific">Staphylococcus aureus (strain NCTC 8325 / PS 47)</name>
    <dbReference type="NCBI Taxonomy" id="93061"/>
    <lineage>
        <taxon>Bacteria</taxon>
        <taxon>Bacillati</taxon>
        <taxon>Bacillota</taxon>
        <taxon>Bacilli</taxon>
        <taxon>Bacillales</taxon>
        <taxon>Staphylococcaceae</taxon>
        <taxon>Staphylococcus</taxon>
    </lineage>
</organism>
<dbReference type="EC" id="2.1.1.61" evidence="1"/>
<dbReference type="EMBL" id="CP000253">
    <property type="protein sequence ID" value="ABD30943.1"/>
    <property type="molecule type" value="Genomic_DNA"/>
</dbReference>
<dbReference type="RefSeq" id="WP_000764419.1">
    <property type="nucleotide sequence ID" value="NZ_LS483365.1"/>
</dbReference>
<dbReference type="RefSeq" id="YP_500381.1">
    <property type="nucleotide sequence ID" value="NC_007795.1"/>
</dbReference>
<dbReference type="PDB" id="8H1A">
    <property type="method" value="X-ray"/>
    <property type="resolution" value="1.44 A"/>
    <property type="chains" value="A/B=1-187"/>
</dbReference>
<dbReference type="PDB" id="8H1B">
    <property type="method" value="X-ray"/>
    <property type="resolution" value="1.55 A"/>
    <property type="chains" value="A/B=1-187"/>
</dbReference>
<dbReference type="PDB" id="8H26">
    <property type="method" value="X-ray"/>
    <property type="resolution" value="1.50 A"/>
    <property type="chains" value="A/B/C/D/E/F=1-187"/>
</dbReference>
<dbReference type="PDB" id="8H27">
    <property type="method" value="X-ray"/>
    <property type="resolution" value="2.04 A"/>
    <property type="chains" value="A/B/C/D=1-187"/>
</dbReference>
<dbReference type="PDBsum" id="8H1A"/>
<dbReference type="PDBsum" id="8H1B"/>
<dbReference type="PDBsum" id="8H26"/>
<dbReference type="PDBsum" id="8H27"/>
<dbReference type="SMR" id="Q2FXG9"/>
<dbReference type="STRING" id="93061.SAOUHSC_01878"/>
<dbReference type="PaxDb" id="1280-SAXN108_1792"/>
<dbReference type="GeneID" id="3921767"/>
<dbReference type="KEGG" id="sao:SAOUHSC_01878"/>
<dbReference type="PATRIC" id="fig|93061.5.peg.1710"/>
<dbReference type="eggNOG" id="COG0275">
    <property type="taxonomic scope" value="Bacteria"/>
</dbReference>
<dbReference type="HOGENOM" id="CLU_079190_1_0_9"/>
<dbReference type="OrthoDB" id="9792989at2"/>
<dbReference type="Proteomes" id="UP000008816">
    <property type="component" value="Chromosome"/>
</dbReference>
<dbReference type="GO" id="GO:0008168">
    <property type="term" value="F:methyltransferase activity"/>
    <property type="evidence" value="ECO:0007669"/>
    <property type="project" value="UniProtKB-KW"/>
</dbReference>
<dbReference type="GO" id="GO:0032259">
    <property type="term" value="P:methylation"/>
    <property type="evidence" value="ECO:0007669"/>
    <property type="project" value="UniProtKB-KW"/>
</dbReference>
<dbReference type="GO" id="GO:0008033">
    <property type="term" value="P:tRNA processing"/>
    <property type="evidence" value="ECO:0007669"/>
    <property type="project" value="UniProtKB-KW"/>
</dbReference>
<dbReference type="CDD" id="cd02440">
    <property type="entry name" value="AdoMet_MTases"/>
    <property type="match status" value="1"/>
</dbReference>
<dbReference type="Gene3D" id="3.40.50.150">
    <property type="entry name" value="Vaccinia Virus protein VP39"/>
    <property type="match status" value="1"/>
</dbReference>
<dbReference type="InterPro" id="IPR010719">
    <property type="entry name" value="MnmM_MeTrfase"/>
</dbReference>
<dbReference type="InterPro" id="IPR029063">
    <property type="entry name" value="SAM-dependent_MTases_sf"/>
</dbReference>
<dbReference type="PANTHER" id="PTHR35276">
    <property type="entry name" value="S-ADENOSYL-L-METHIONINE-DEPENDENT METHYLTRANSFERASES SUPERFAMILY PROTEIN"/>
    <property type="match status" value="1"/>
</dbReference>
<dbReference type="PANTHER" id="PTHR35276:SF1">
    <property type="entry name" value="TRNA (MNM(5)S(2)U34)-METHYLTRANSFERASE, CHLOROPLASTIC"/>
    <property type="match status" value="1"/>
</dbReference>
<dbReference type="Pfam" id="PF06962">
    <property type="entry name" value="rRNA_methylase"/>
    <property type="match status" value="1"/>
</dbReference>
<dbReference type="SUPFAM" id="SSF53335">
    <property type="entry name" value="S-adenosyl-L-methionine-dependent methyltransferases"/>
    <property type="match status" value="1"/>
</dbReference>
<reference key="1">
    <citation type="book" date="2006" name="Gram positive pathogens, 2nd edition">
        <title>The Staphylococcus aureus NCTC 8325 genome.</title>
        <editorList>
            <person name="Fischetti V."/>
            <person name="Novick R."/>
            <person name="Ferretti J."/>
            <person name="Portnoy D."/>
            <person name="Rood J."/>
        </editorList>
        <authorList>
            <person name="Gillaspy A.F."/>
            <person name="Worrell V."/>
            <person name="Orvis J."/>
            <person name="Roe B.A."/>
            <person name="Dyer D.W."/>
            <person name="Iandolo J.J."/>
        </authorList>
    </citation>
    <scope>NUCLEOTIDE SEQUENCE [LARGE SCALE GENOMIC DNA]</scope>
    <source>
        <strain>NCTC 8325 / PS 47</strain>
    </source>
</reference>
<reference evidence="5 6 7" key="2">
    <citation type="journal article" date="2023" name="Nucleic Acids Res.">
        <title>Identification of a novel 5-aminomethyl-2-thiouridine methyltransferase in tRNA modification.</title>
        <authorList>
            <person name="Cho G."/>
            <person name="Lee J."/>
            <person name="Kim J."/>
        </authorList>
    </citation>
    <scope>X-RAY CRYSTALLOGRAPHY (1.44 ANGSTROMS) OF APOENZYME AND IN COMPLEXES WITH TRNA ANTICODON STEM LOOP AND S-ADENOSYL-L-METHIONINE</scope>
    <scope>FUNCTION</scope>
    <scope>CATALYTIC ACTIVITY</scope>
    <scope>PATHWAY</scope>
    <scope>SUBUNIT</scope>
</reference>
<proteinExistence type="evidence at protein level"/>
<protein>
    <recommendedName>
        <fullName evidence="3">tRNA (mnm(5)s(2)U34)-methyltransferase</fullName>
        <ecNumber evidence="1">2.1.1.61</ecNumber>
    </recommendedName>
    <alternativeName>
        <fullName evidence="2">5-aminomethyl-2-thiouridine methyltransferase</fullName>
    </alternativeName>
    <alternativeName>
        <fullName evidence="2">MnmC-like methyltransferase</fullName>
    </alternativeName>
    <alternativeName>
        <fullName evidence="2">saMnmM</fullName>
    </alternativeName>
    <alternativeName>
        <fullName evidence="3">tRNA 5-(aminomethyl)-2-thiouridylate-methyltransferase</fullName>
    </alternativeName>
</protein>
<keyword id="KW-0002">3D-structure</keyword>
<keyword id="KW-0489">Methyltransferase</keyword>
<keyword id="KW-1185">Reference proteome</keyword>
<keyword id="KW-0949">S-adenosyl-L-methionine</keyword>
<keyword id="KW-0808">Transferase</keyword>
<keyword id="KW-0819">tRNA processing</keyword>